<evidence type="ECO:0000255" key="1">
    <source>
        <dbReference type="HAMAP-Rule" id="MF_00249"/>
    </source>
</evidence>
<evidence type="ECO:0000256" key="2">
    <source>
        <dbReference type="SAM" id="MobiDB-lite"/>
    </source>
</evidence>
<name>HSLU_FRATM</name>
<dbReference type="EMBL" id="CP000915">
    <property type="protein sequence ID" value="ACD31053.1"/>
    <property type="molecule type" value="Genomic_DNA"/>
</dbReference>
<dbReference type="SMR" id="B2SH45"/>
<dbReference type="KEGG" id="ftm:FTM_1171"/>
<dbReference type="HOGENOM" id="CLU_033123_0_0_6"/>
<dbReference type="GO" id="GO:0009376">
    <property type="term" value="C:HslUV protease complex"/>
    <property type="evidence" value="ECO:0007669"/>
    <property type="project" value="UniProtKB-UniRule"/>
</dbReference>
<dbReference type="GO" id="GO:0005524">
    <property type="term" value="F:ATP binding"/>
    <property type="evidence" value="ECO:0007669"/>
    <property type="project" value="UniProtKB-UniRule"/>
</dbReference>
<dbReference type="GO" id="GO:0016887">
    <property type="term" value="F:ATP hydrolysis activity"/>
    <property type="evidence" value="ECO:0007669"/>
    <property type="project" value="InterPro"/>
</dbReference>
<dbReference type="GO" id="GO:0008233">
    <property type="term" value="F:peptidase activity"/>
    <property type="evidence" value="ECO:0007669"/>
    <property type="project" value="InterPro"/>
</dbReference>
<dbReference type="GO" id="GO:0036402">
    <property type="term" value="F:proteasome-activating activity"/>
    <property type="evidence" value="ECO:0007669"/>
    <property type="project" value="UniProtKB-UniRule"/>
</dbReference>
<dbReference type="GO" id="GO:0043335">
    <property type="term" value="P:protein unfolding"/>
    <property type="evidence" value="ECO:0007669"/>
    <property type="project" value="UniProtKB-UniRule"/>
</dbReference>
<dbReference type="GO" id="GO:0051603">
    <property type="term" value="P:proteolysis involved in protein catabolic process"/>
    <property type="evidence" value="ECO:0007669"/>
    <property type="project" value="TreeGrafter"/>
</dbReference>
<dbReference type="CDD" id="cd19498">
    <property type="entry name" value="RecA-like_HslU"/>
    <property type="match status" value="1"/>
</dbReference>
<dbReference type="FunFam" id="3.40.50.300:FF:000213">
    <property type="entry name" value="ATP-dependent protease ATPase subunit HslU"/>
    <property type="match status" value="1"/>
</dbReference>
<dbReference type="FunFam" id="3.40.50.300:FF:000220">
    <property type="entry name" value="ATP-dependent protease ATPase subunit HslU"/>
    <property type="match status" value="1"/>
</dbReference>
<dbReference type="Gene3D" id="1.10.8.60">
    <property type="match status" value="1"/>
</dbReference>
<dbReference type="Gene3D" id="3.40.50.300">
    <property type="entry name" value="P-loop containing nucleotide triphosphate hydrolases"/>
    <property type="match status" value="2"/>
</dbReference>
<dbReference type="HAMAP" id="MF_00249">
    <property type="entry name" value="HslU"/>
    <property type="match status" value="1"/>
</dbReference>
<dbReference type="InterPro" id="IPR003593">
    <property type="entry name" value="AAA+_ATPase"/>
</dbReference>
<dbReference type="InterPro" id="IPR050052">
    <property type="entry name" value="ATP-dep_Clp_protease_ClpX"/>
</dbReference>
<dbReference type="InterPro" id="IPR003959">
    <property type="entry name" value="ATPase_AAA_core"/>
</dbReference>
<dbReference type="InterPro" id="IPR019489">
    <property type="entry name" value="Clp_ATPase_C"/>
</dbReference>
<dbReference type="InterPro" id="IPR004491">
    <property type="entry name" value="HslU"/>
</dbReference>
<dbReference type="InterPro" id="IPR027417">
    <property type="entry name" value="P-loop_NTPase"/>
</dbReference>
<dbReference type="NCBIfam" id="TIGR00390">
    <property type="entry name" value="hslU"/>
    <property type="match status" value="1"/>
</dbReference>
<dbReference type="NCBIfam" id="NF003544">
    <property type="entry name" value="PRK05201.1"/>
    <property type="match status" value="1"/>
</dbReference>
<dbReference type="PANTHER" id="PTHR48102">
    <property type="entry name" value="ATP-DEPENDENT CLP PROTEASE ATP-BINDING SUBUNIT CLPX-LIKE, MITOCHONDRIAL-RELATED"/>
    <property type="match status" value="1"/>
</dbReference>
<dbReference type="PANTHER" id="PTHR48102:SF3">
    <property type="entry name" value="ATP-DEPENDENT PROTEASE ATPASE SUBUNIT HSLU"/>
    <property type="match status" value="1"/>
</dbReference>
<dbReference type="Pfam" id="PF00004">
    <property type="entry name" value="AAA"/>
    <property type="match status" value="1"/>
</dbReference>
<dbReference type="Pfam" id="PF07724">
    <property type="entry name" value="AAA_2"/>
    <property type="match status" value="1"/>
</dbReference>
<dbReference type="SMART" id="SM00382">
    <property type="entry name" value="AAA"/>
    <property type="match status" value="1"/>
</dbReference>
<dbReference type="SMART" id="SM01086">
    <property type="entry name" value="ClpB_D2-small"/>
    <property type="match status" value="1"/>
</dbReference>
<dbReference type="SUPFAM" id="SSF52540">
    <property type="entry name" value="P-loop containing nucleoside triphosphate hydrolases"/>
    <property type="match status" value="1"/>
</dbReference>
<comment type="function">
    <text evidence="1">ATPase subunit of a proteasome-like degradation complex; this subunit has chaperone activity. The binding of ATP and its subsequent hydrolysis by HslU are essential for unfolding of protein substrates subsequently hydrolyzed by HslV. HslU recognizes the N-terminal part of its protein substrates and unfolds these before they are guided to HslV for hydrolysis.</text>
</comment>
<comment type="subunit">
    <text evidence="1">A double ring-shaped homohexamer of HslV is capped on each side by a ring-shaped HslU homohexamer. The assembly of the HslU/HslV complex is dependent on binding of ATP.</text>
</comment>
<comment type="subcellular location">
    <subcellularLocation>
        <location evidence="1">Cytoplasm</location>
    </subcellularLocation>
</comment>
<comment type="similarity">
    <text evidence="1">Belongs to the ClpX chaperone family. HslU subfamily.</text>
</comment>
<organism>
    <name type="scientific">Francisella tularensis subsp. mediasiatica (strain FSC147)</name>
    <dbReference type="NCBI Taxonomy" id="441952"/>
    <lineage>
        <taxon>Bacteria</taxon>
        <taxon>Pseudomonadati</taxon>
        <taxon>Pseudomonadota</taxon>
        <taxon>Gammaproteobacteria</taxon>
        <taxon>Thiotrichales</taxon>
        <taxon>Francisellaceae</taxon>
        <taxon>Francisella</taxon>
    </lineage>
</organism>
<keyword id="KW-0067">ATP-binding</keyword>
<keyword id="KW-0143">Chaperone</keyword>
<keyword id="KW-0963">Cytoplasm</keyword>
<keyword id="KW-0547">Nucleotide-binding</keyword>
<sequence length="455" mass="51237">MTQIMTPKTIVHELERHIIGQNDAKKAVAIALRNRWRRMQLDNEMRQEVTPKNILMIGPTGVGKTEIARRLAKLADAPFIKVEATKFTEVGYVGKDVESIIRDLVETAVKMKREEAKEKVTEKAARLAEDRILDVLIPPARTSESKVGFANEPAEDAASKKEKENKTREIFRKKIQNGELDDKEIEIEVAVAPKTIGVMGPPGMEDMTSQLQDLFSSLSTDKKKNKKMRIKDAIKLAQDEEAAKLVNEEDIKARALEAVEQNGIVFLDEIDKVCRKSSNSGADVSREGVQRDLLPLVEGSTVSTKYGVIKTDHILFIASGAFHVAKPSDLIPELQGRLPIRVELKSLEIEDFVRILREPDCSILKQYIALMKTEGIDLSFEEDAIRKIAEIAYKVNEEVENIGARRLHTVMERLLEKISFDAPELVEKNINITTDYVNEKLGNLVKNKDLSQYIL</sequence>
<accession>B2SH45</accession>
<protein>
    <recommendedName>
        <fullName evidence="1">ATP-dependent protease ATPase subunit HslU</fullName>
    </recommendedName>
    <alternativeName>
        <fullName evidence="1">Unfoldase HslU</fullName>
    </alternativeName>
</protein>
<feature type="chain" id="PRO_1000100950" description="ATP-dependent protease ATPase subunit HslU">
    <location>
        <begin position="1"/>
        <end position="455"/>
    </location>
</feature>
<feature type="region of interest" description="Disordered" evidence="2">
    <location>
        <begin position="144"/>
        <end position="163"/>
    </location>
</feature>
<feature type="binding site" evidence="1">
    <location>
        <position position="19"/>
    </location>
    <ligand>
        <name>ATP</name>
        <dbReference type="ChEBI" id="CHEBI:30616"/>
    </ligand>
</feature>
<feature type="binding site" evidence="1">
    <location>
        <begin position="61"/>
        <end position="66"/>
    </location>
    <ligand>
        <name>ATP</name>
        <dbReference type="ChEBI" id="CHEBI:30616"/>
    </ligand>
</feature>
<feature type="binding site" evidence="1">
    <location>
        <position position="268"/>
    </location>
    <ligand>
        <name>ATP</name>
        <dbReference type="ChEBI" id="CHEBI:30616"/>
    </ligand>
</feature>
<feature type="binding site" evidence="1">
    <location>
        <position position="333"/>
    </location>
    <ligand>
        <name>ATP</name>
        <dbReference type="ChEBI" id="CHEBI:30616"/>
    </ligand>
</feature>
<feature type="binding site" evidence="1">
    <location>
        <position position="405"/>
    </location>
    <ligand>
        <name>ATP</name>
        <dbReference type="ChEBI" id="CHEBI:30616"/>
    </ligand>
</feature>
<reference key="1">
    <citation type="journal article" date="2009" name="PLoS Pathog.">
        <title>Molecular evolutionary consequences of niche restriction in Francisella tularensis, a facultative intracellular pathogen.</title>
        <authorList>
            <person name="Larsson P."/>
            <person name="Elfsmark D."/>
            <person name="Svensson K."/>
            <person name="Wikstroem P."/>
            <person name="Forsman M."/>
            <person name="Brettin T."/>
            <person name="Keim P."/>
            <person name="Johansson A."/>
        </authorList>
    </citation>
    <scope>NUCLEOTIDE SEQUENCE [LARGE SCALE GENOMIC DNA]</scope>
    <source>
        <strain>FSC147</strain>
    </source>
</reference>
<gene>
    <name evidence="1" type="primary">hslU</name>
    <name type="ordered locus">FTM_1171</name>
</gene>
<proteinExistence type="inferred from homology"/>